<evidence type="ECO:0000255" key="1">
    <source>
        <dbReference type="HAMAP-Rule" id="MF_00368"/>
    </source>
</evidence>
<evidence type="ECO:0000256" key="2">
    <source>
        <dbReference type="SAM" id="MobiDB-lite"/>
    </source>
</evidence>
<evidence type="ECO:0000305" key="3"/>
<gene>
    <name evidence="1" type="primary">rplL</name>
    <name type="ordered locus">Maqu_0711</name>
</gene>
<protein>
    <recommendedName>
        <fullName evidence="1">Large ribosomal subunit protein bL12</fullName>
    </recommendedName>
    <alternativeName>
        <fullName evidence="3">50S ribosomal protein L7/L12</fullName>
    </alternativeName>
</protein>
<reference key="1">
    <citation type="journal article" date="2011" name="Appl. Environ. Microbiol.">
        <title>Genomic potential of Marinobacter aquaeolei, a biogeochemical 'opportunitroph'.</title>
        <authorList>
            <person name="Singer E."/>
            <person name="Webb E.A."/>
            <person name="Nelson W.C."/>
            <person name="Heidelberg J.F."/>
            <person name="Ivanova N."/>
            <person name="Pati A."/>
            <person name="Edwards K.J."/>
        </authorList>
    </citation>
    <scope>NUCLEOTIDE SEQUENCE [LARGE SCALE GENOMIC DNA]</scope>
    <source>
        <strain>ATCC 700491 / DSM 11845 / VT8</strain>
    </source>
</reference>
<feature type="chain" id="PRO_1000007037" description="Large ribosomal subunit protein bL12">
    <location>
        <begin position="1"/>
        <end position="124"/>
    </location>
</feature>
<feature type="region of interest" description="Disordered" evidence="2">
    <location>
        <begin position="93"/>
        <end position="124"/>
    </location>
</feature>
<feature type="compositionally biased region" description="Basic and acidic residues" evidence="2">
    <location>
        <begin position="101"/>
        <end position="116"/>
    </location>
</feature>
<comment type="function">
    <text evidence="1">Forms part of the ribosomal stalk which helps the ribosome interact with GTP-bound translation factors. Is thus essential for accurate translation.</text>
</comment>
<comment type="subunit">
    <text evidence="1">Homodimer. Part of the ribosomal stalk of the 50S ribosomal subunit. Forms a multimeric L10(L12)X complex, where L10 forms an elongated spine to which 2 to 4 L12 dimers bind in a sequential fashion. Binds GTP-bound translation factors.</text>
</comment>
<comment type="similarity">
    <text evidence="1">Belongs to the bacterial ribosomal protein bL12 family.</text>
</comment>
<organism>
    <name type="scientific">Marinobacter nauticus (strain ATCC 700491 / DSM 11845 / VT8)</name>
    <name type="common">Marinobacter aquaeolei</name>
    <dbReference type="NCBI Taxonomy" id="351348"/>
    <lineage>
        <taxon>Bacteria</taxon>
        <taxon>Pseudomonadati</taxon>
        <taxon>Pseudomonadota</taxon>
        <taxon>Gammaproteobacteria</taxon>
        <taxon>Pseudomonadales</taxon>
        <taxon>Marinobacteraceae</taxon>
        <taxon>Marinobacter</taxon>
    </lineage>
</organism>
<dbReference type="EMBL" id="CP000514">
    <property type="protein sequence ID" value="ABM17808.1"/>
    <property type="molecule type" value="Genomic_DNA"/>
</dbReference>
<dbReference type="RefSeq" id="WP_011784240.1">
    <property type="nucleotide sequence ID" value="NC_008740.1"/>
</dbReference>
<dbReference type="SMR" id="A1TYI9"/>
<dbReference type="STRING" id="351348.Maqu_0711"/>
<dbReference type="GeneID" id="31820086"/>
<dbReference type="KEGG" id="maq:Maqu_0711"/>
<dbReference type="eggNOG" id="COG0222">
    <property type="taxonomic scope" value="Bacteria"/>
</dbReference>
<dbReference type="HOGENOM" id="CLU_086499_3_0_6"/>
<dbReference type="OrthoDB" id="9811748at2"/>
<dbReference type="Proteomes" id="UP000000998">
    <property type="component" value="Chromosome"/>
</dbReference>
<dbReference type="GO" id="GO:0022625">
    <property type="term" value="C:cytosolic large ribosomal subunit"/>
    <property type="evidence" value="ECO:0007669"/>
    <property type="project" value="TreeGrafter"/>
</dbReference>
<dbReference type="GO" id="GO:0003729">
    <property type="term" value="F:mRNA binding"/>
    <property type="evidence" value="ECO:0007669"/>
    <property type="project" value="TreeGrafter"/>
</dbReference>
<dbReference type="GO" id="GO:0003735">
    <property type="term" value="F:structural constituent of ribosome"/>
    <property type="evidence" value="ECO:0007669"/>
    <property type="project" value="InterPro"/>
</dbReference>
<dbReference type="GO" id="GO:0006412">
    <property type="term" value="P:translation"/>
    <property type="evidence" value="ECO:0007669"/>
    <property type="project" value="UniProtKB-UniRule"/>
</dbReference>
<dbReference type="CDD" id="cd00387">
    <property type="entry name" value="Ribosomal_L7_L12"/>
    <property type="match status" value="1"/>
</dbReference>
<dbReference type="FunFam" id="3.30.1390.10:FF:000001">
    <property type="entry name" value="50S ribosomal protein L7/L12"/>
    <property type="match status" value="1"/>
</dbReference>
<dbReference type="Gene3D" id="3.30.1390.10">
    <property type="match status" value="1"/>
</dbReference>
<dbReference type="Gene3D" id="1.20.5.710">
    <property type="entry name" value="Single helix bin"/>
    <property type="match status" value="1"/>
</dbReference>
<dbReference type="HAMAP" id="MF_00368">
    <property type="entry name" value="Ribosomal_bL12"/>
    <property type="match status" value="1"/>
</dbReference>
<dbReference type="InterPro" id="IPR000206">
    <property type="entry name" value="Ribosomal_bL12"/>
</dbReference>
<dbReference type="InterPro" id="IPR013823">
    <property type="entry name" value="Ribosomal_bL12_C"/>
</dbReference>
<dbReference type="InterPro" id="IPR014719">
    <property type="entry name" value="Ribosomal_bL12_C/ClpS-like"/>
</dbReference>
<dbReference type="InterPro" id="IPR008932">
    <property type="entry name" value="Ribosomal_bL12_oligo"/>
</dbReference>
<dbReference type="InterPro" id="IPR036235">
    <property type="entry name" value="Ribosomal_bL12_oligo_N_sf"/>
</dbReference>
<dbReference type="NCBIfam" id="TIGR00855">
    <property type="entry name" value="L12"/>
    <property type="match status" value="1"/>
</dbReference>
<dbReference type="PANTHER" id="PTHR45987">
    <property type="entry name" value="39S RIBOSOMAL PROTEIN L12"/>
    <property type="match status" value="1"/>
</dbReference>
<dbReference type="PANTHER" id="PTHR45987:SF4">
    <property type="entry name" value="LARGE RIBOSOMAL SUBUNIT PROTEIN BL12M"/>
    <property type="match status" value="1"/>
</dbReference>
<dbReference type="Pfam" id="PF00542">
    <property type="entry name" value="Ribosomal_L12"/>
    <property type="match status" value="1"/>
</dbReference>
<dbReference type="Pfam" id="PF16320">
    <property type="entry name" value="Ribosomal_L12_N"/>
    <property type="match status" value="1"/>
</dbReference>
<dbReference type="SUPFAM" id="SSF54736">
    <property type="entry name" value="ClpS-like"/>
    <property type="match status" value="1"/>
</dbReference>
<dbReference type="SUPFAM" id="SSF48300">
    <property type="entry name" value="Ribosomal protein L7/12, oligomerisation (N-terminal) domain"/>
    <property type="match status" value="1"/>
</dbReference>
<keyword id="KW-0687">Ribonucleoprotein</keyword>
<keyword id="KW-0689">Ribosomal protein</keyword>
<name>RL7_MARN8</name>
<sequence>MALSKDDILNAIAEMSVMEVVELVEAMEEKFNVSAAAAVAAAPAAAAAGEAAEEKTEFDVVLTGAGEKKVNVIKAVRELTGLGLKEAKEMVDGAPSTVKEGASKDEAEEAKKKLEEAGASVELK</sequence>
<proteinExistence type="inferred from homology"/>
<accession>A1TYI9</accession>